<keyword id="KW-0240">DNA-directed RNA polymerase</keyword>
<keyword id="KW-0548">Nucleotidyltransferase</keyword>
<keyword id="KW-1185">Reference proteome</keyword>
<keyword id="KW-0804">Transcription</keyword>
<keyword id="KW-0808">Transferase</keyword>
<gene>
    <name evidence="1" type="primary">rpoA</name>
    <name type="ordered locus">Pcar_0728</name>
</gene>
<evidence type="ECO:0000255" key="1">
    <source>
        <dbReference type="HAMAP-Rule" id="MF_00059"/>
    </source>
</evidence>
<dbReference type="EC" id="2.7.7.6" evidence="1"/>
<dbReference type="EMBL" id="CP000142">
    <property type="protein sequence ID" value="ABA87987.1"/>
    <property type="molecule type" value="Genomic_DNA"/>
</dbReference>
<dbReference type="RefSeq" id="WP_011340430.1">
    <property type="nucleotide sequence ID" value="NC_007498.2"/>
</dbReference>
<dbReference type="SMR" id="Q3A6M0"/>
<dbReference type="STRING" id="338963.Pcar_0728"/>
<dbReference type="KEGG" id="pca:Pcar_0728"/>
<dbReference type="eggNOG" id="COG0202">
    <property type="taxonomic scope" value="Bacteria"/>
</dbReference>
<dbReference type="HOGENOM" id="CLU_053084_0_1_7"/>
<dbReference type="OrthoDB" id="9805706at2"/>
<dbReference type="Proteomes" id="UP000002534">
    <property type="component" value="Chromosome"/>
</dbReference>
<dbReference type="GO" id="GO:0005737">
    <property type="term" value="C:cytoplasm"/>
    <property type="evidence" value="ECO:0007669"/>
    <property type="project" value="UniProtKB-ARBA"/>
</dbReference>
<dbReference type="GO" id="GO:0000428">
    <property type="term" value="C:DNA-directed RNA polymerase complex"/>
    <property type="evidence" value="ECO:0007669"/>
    <property type="project" value="UniProtKB-KW"/>
</dbReference>
<dbReference type="GO" id="GO:0003677">
    <property type="term" value="F:DNA binding"/>
    <property type="evidence" value="ECO:0007669"/>
    <property type="project" value="UniProtKB-UniRule"/>
</dbReference>
<dbReference type="GO" id="GO:0003899">
    <property type="term" value="F:DNA-directed RNA polymerase activity"/>
    <property type="evidence" value="ECO:0007669"/>
    <property type="project" value="UniProtKB-UniRule"/>
</dbReference>
<dbReference type="GO" id="GO:0046983">
    <property type="term" value="F:protein dimerization activity"/>
    <property type="evidence" value="ECO:0007669"/>
    <property type="project" value="InterPro"/>
</dbReference>
<dbReference type="GO" id="GO:0006351">
    <property type="term" value="P:DNA-templated transcription"/>
    <property type="evidence" value="ECO:0007669"/>
    <property type="project" value="UniProtKB-UniRule"/>
</dbReference>
<dbReference type="CDD" id="cd06928">
    <property type="entry name" value="RNAP_alpha_NTD"/>
    <property type="match status" value="1"/>
</dbReference>
<dbReference type="FunFam" id="1.10.150.20:FF:000001">
    <property type="entry name" value="DNA-directed RNA polymerase subunit alpha"/>
    <property type="match status" value="1"/>
</dbReference>
<dbReference type="FunFam" id="2.170.120.12:FF:000001">
    <property type="entry name" value="DNA-directed RNA polymerase subunit alpha"/>
    <property type="match status" value="1"/>
</dbReference>
<dbReference type="Gene3D" id="1.10.150.20">
    <property type="entry name" value="5' to 3' exonuclease, C-terminal subdomain"/>
    <property type="match status" value="1"/>
</dbReference>
<dbReference type="Gene3D" id="2.170.120.12">
    <property type="entry name" value="DNA-directed RNA polymerase, insert domain"/>
    <property type="match status" value="1"/>
</dbReference>
<dbReference type="Gene3D" id="3.30.1360.10">
    <property type="entry name" value="RNA polymerase, RBP11-like subunit"/>
    <property type="match status" value="1"/>
</dbReference>
<dbReference type="HAMAP" id="MF_00059">
    <property type="entry name" value="RNApol_bact_RpoA"/>
    <property type="match status" value="1"/>
</dbReference>
<dbReference type="InterPro" id="IPR011262">
    <property type="entry name" value="DNA-dir_RNA_pol_insert"/>
</dbReference>
<dbReference type="InterPro" id="IPR011263">
    <property type="entry name" value="DNA-dir_RNA_pol_RpoA/D/Rpb3"/>
</dbReference>
<dbReference type="InterPro" id="IPR011773">
    <property type="entry name" value="DNA-dir_RpoA"/>
</dbReference>
<dbReference type="InterPro" id="IPR036603">
    <property type="entry name" value="RBP11-like"/>
</dbReference>
<dbReference type="InterPro" id="IPR011260">
    <property type="entry name" value="RNAP_asu_C"/>
</dbReference>
<dbReference type="InterPro" id="IPR036643">
    <property type="entry name" value="RNApol_insert_sf"/>
</dbReference>
<dbReference type="NCBIfam" id="NF003513">
    <property type="entry name" value="PRK05182.1-2"/>
    <property type="match status" value="1"/>
</dbReference>
<dbReference type="NCBIfam" id="NF003519">
    <property type="entry name" value="PRK05182.2-5"/>
    <property type="match status" value="1"/>
</dbReference>
<dbReference type="NCBIfam" id="TIGR02027">
    <property type="entry name" value="rpoA"/>
    <property type="match status" value="1"/>
</dbReference>
<dbReference type="Pfam" id="PF01000">
    <property type="entry name" value="RNA_pol_A_bac"/>
    <property type="match status" value="1"/>
</dbReference>
<dbReference type="Pfam" id="PF03118">
    <property type="entry name" value="RNA_pol_A_CTD"/>
    <property type="match status" value="1"/>
</dbReference>
<dbReference type="Pfam" id="PF01193">
    <property type="entry name" value="RNA_pol_L"/>
    <property type="match status" value="1"/>
</dbReference>
<dbReference type="SMART" id="SM00662">
    <property type="entry name" value="RPOLD"/>
    <property type="match status" value="1"/>
</dbReference>
<dbReference type="SUPFAM" id="SSF47789">
    <property type="entry name" value="C-terminal domain of RNA polymerase alpha subunit"/>
    <property type="match status" value="1"/>
</dbReference>
<dbReference type="SUPFAM" id="SSF56553">
    <property type="entry name" value="Insert subdomain of RNA polymerase alpha subunit"/>
    <property type="match status" value="1"/>
</dbReference>
<dbReference type="SUPFAM" id="SSF55257">
    <property type="entry name" value="RBP11-like subunits of RNA polymerase"/>
    <property type="match status" value="1"/>
</dbReference>
<proteinExistence type="inferred from homology"/>
<accession>Q3A6M0</accession>
<name>RPOA_SYNC1</name>
<protein>
    <recommendedName>
        <fullName evidence="1">DNA-directed RNA polymerase subunit alpha</fullName>
        <shortName evidence="1">RNAP subunit alpha</shortName>
        <ecNumber evidence="1">2.7.7.6</ecNumber>
    </recommendedName>
    <alternativeName>
        <fullName evidence="1">RNA polymerase subunit alpha</fullName>
    </alternativeName>
    <alternativeName>
        <fullName evidence="1">Transcriptase subunit alpha</fullName>
    </alternativeName>
</protein>
<feature type="chain" id="PRO_0000225288" description="DNA-directed RNA polymerase subunit alpha">
    <location>
        <begin position="1"/>
        <end position="338"/>
    </location>
</feature>
<feature type="region of interest" description="Alpha N-terminal domain (alpha-NTD)" evidence="1">
    <location>
        <begin position="1"/>
        <end position="233"/>
    </location>
</feature>
<feature type="region of interest" description="Alpha C-terminal domain (alpha-CTD)" evidence="1">
    <location>
        <begin position="250"/>
        <end position="338"/>
    </location>
</feature>
<sequence length="338" mass="37659">MYKNWRELIKPKRLQVDADSLSDTYGKFMAEPFERGFGTTLGNSLRRVLLSSLQGAAITSVRIKGVLHEFSNIPGVTEDVTDIILNLKGVLLKLHGSDSRNIRIVKKGAGVITAADIITDSHVDVLNPDHHILTCGKDADIELDMVVAMGKGYVPAERNRDDKAPVGTIPIDSLFSPVKKVNFTVTNARVGQITDYDKLILEVLTDGSVRPDDGVAYAAKILKEQLQIFINFDEETETVVEEESEESRKINENLYRSVEELELSVRSANCLKNANIHLIGDLVQRSEAEMLKTQNFGRKSLNEIKDILAEMGLSLGMMLENFPDPEYLKMIQEGKEDL</sequence>
<organism>
    <name type="scientific">Syntrophotalea carbinolica (strain DSM 2380 / NBRC 103641 / GraBd1)</name>
    <name type="common">Pelobacter carbinolicus</name>
    <dbReference type="NCBI Taxonomy" id="338963"/>
    <lineage>
        <taxon>Bacteria</taxon>
        <taxon>Pseudomonadati</taxon>
        <taxon>Thermodesulfobacteriota</taxon>
        <taxon>Desulfuromonadia</taxon>
        <taxon>Desulfuromonadales</taxon>
        <taxon>Syntrophotaleaceae</taxon>
        <taxon>Syntrophotalea</taxon>
    </lineage>
</organism>
<comment type="function">
    <text evidence="1">DNA-dependent RNA polymerase catalyzes the transcription of DNA into RNA using the four ribonucleoside triphosphates as substrates.</text>
</comment>
<comment type="catalytic activity">
    <reaction evidence="1">
        <text>RNA(n) + a ribonucleoside 5'-triphosphate = RNA(n+1) + diphosphate</text>
        <dbReference type="Rhea" id="RHEA:21248"/>
        <dbReference type="Rhea" id="RHEA-COMP:14527"/>
        <dbReference type="Rhea" id="RHEA-COMP:17342"/>
        <dbReference type="ChEBI" id="CHEBI:33019"/>
        <dbReference type="ChEBI" id="CHEBI:61557"/>
        <dbReference type="ChEBI" id="CHEBI:140395"/>
        <dbReference type="EC" id="2.7.7.6"/>
    </reaction>
</comment>
<comment type="subunit">
    <text evidence="1">Homodimer. The RNAP catalytic core consists of 2 alpha, 1 beta, 1 beta' and 1 omega subunit. When a sigma factor is associated with the core the holoenzyme is formed, which can initiate transcription.</text>
</comment>
<comment type="domain">
    <text evidence="1">The N-terminal domain is essential for RNAP assembly and basal transcription, whereas the C-terminal domain is involved in interaction with transcriptional regulators and with upstream promoter elements.</text>
</comment>
<comment type="similarity">
    <text evidence="1">Belongs to the RNA polymerase alpha chain family.</text>
</comment>
<reference key="1">
    <citation type="submission" date="2005-10" db="EMBL/GenBank/DDBJ databases">
        <title>Complete sequence of Pelobacter carbinolicus DSM 2380.</title>
        <authorList>
            <person name="Copeland A."/>
            <person name="Lucas S."/>
            <person name="Lapidus A."/>
            <person name="Barry K."/>
            <person name="Detter J.C."/>
            <person name="Glavina T."/>
            <person name="Hammon N."/>
            <person name="Israni S."/>
            <person name="Pitluck S."/>
            <person name="Chertkov O."/>
            <person name="Schmutz J."/>
            <person name="Larimer F."/>
            <person name="Land M."/>
            <person name="Kyrpides N."/>
            <person name="Ivanova N."/>
            <person name="Richardson P."/>
        </authorList>
    </citation>
    <scope>NUCLEOTIDE SEQUENCE [LARGE SCALE GENOMIC DNA]</scope>
    <source>
        <strain>DSM 2380 / NBRC 103641 / GraBd1</strain>
    </source>
</reference>